<name>ZDH1_STAAW</name>
<reference key="1">
    <citation type="journal article" date="2002" name="Lancet">
        <title>Genome and virulence determinants of high virulence community-acquired MRSA.</title>
        <authorList>
            <person name="Baba T."/>
            <person name="Takeuchi F."/>
            <person name="Kuroda M."/>
            <person name="Yuzawa H."/>
            <person name="Aoki K."/>
            <person name="Oguchi A."/>
            <person name="Nagai Y."/>
            <person name="Iwama N."/>
            <person name="Asano K."/>
            <person name="Naimi T."/>
            <person name="Kuroda H."/>
            <person name="Cui L."/>
            <person name="Yamamoto K."/>
            <person name="Hiramatsu K."/>
        </authorList>
    </citation>
    <scope>NUCLEOTIDE SEQUENCE [LARGE SCALE GENOMIC DNA]</scope>
    <source>
        <strain>MW2</strain>
    </source>
</reference>
<organism>
    <name type="scientific">Staphylococcus aureus (strain MW2)</name>
    <dbReference type="NCBI Taxonomy" id="196620"/>
    <lineage>
        <taxon>Bacteria</taxon>
        <taxon>Bacillati</taxon>
        <taxon>Bacillota</taxon>
        <taxon>Bacilli</taxon>
        <taxon>Bacillales</taxon>
        <taxon>Staphylococcaceae</taxon>
        <taxon>Staphylococcus</taxon>
    </lineage>
</organism>
<sequence>MKMIGFEKPFKLEEGNLFKVYEQRKPTPENDDILVKVNSISVNPVDTKQRQMEVTQAPRVLGFDAIGTVEAIGPDVTLFSPGDVVFYAGSPNRQGSNATYQLVSEAIVAKAPHNISANEAVSLPLTGITAYETFFDTFKISHNPAENEGKSVLIINGAGGVGSIATQIAKRYGLTVITTASRQETTEWCEKMGADIVLNHKEDLVRQFKEKEIPLVDYIFCTYNTDLYYNTMIELIKPLGHITTIVAFNEDQDLNALKLKSITFTHEFMFARPIHRTPDMIKQHEYLEDITKNIESGHYQPTTTQVFEGLSPENLYQAHQLLEKQSMIGKLVINI</sequence>
<keyword id="KW-0479">Metal-binding</keyword>
<keyword id="KW-0560">Oxidoreductase</keyword>
<keyword id="KW-0862">Zinc</keyword>
<comment type="similarity">
    <text evidence="1">Belongs to the zinc-containing alcohol dehydrogenase family. Quinone oxidoreductase subfamily.</text>
</comment>
<protein>
    <recommendedName>
        <fullName>Zinc-type alcohol dehydrogenase-like protein MW2112</fullName>
    </recommendedName>
</protein>
<dbReference type="EMBL" id="BA000033">
    <property type="protein sequence ID" value="BAB95977.1"/>
    <property type="molecule type" value="Genomic_DNA"/>
</dbReference>
<dbReference type="RefSeq" id="WP_000781934.1">
    <property type="nucleotide sequence ID" value="NC_003923.1"/>
</dbReference>
<dbReference type="SMR" id="Q8NVD1"/>
<dbReference type="KEGG" id="sam:MW2112"/>
<dbReference type="HOGENOM" id="CLU_026673_3_0_9"/>
<dbReference type="GO" id="GO:0016491">
    <property type="term" value="F:oxidoreductase activity"/>
    <property type="evidence" value="ECO:0007669"/>
    <property type="project" value="UniProtKB-KW"/>
</dbReference>
<dbReference type="GO" id="GO:0008270">
    <property type="term" value="F:zinc ion binding"/>
    <property type="evidence" value="ECO:0007669"/>
    <property type="project" value="InterPro"/>
</dbReference>
<dbReference type="CDD" id="cd08252">
    <property type="entry name" value="AL_MDR"/>
    <property type="match status" value="1"/>
</dbReference>
<dbReference type="Gene3D" id="3.90.180.10">
    <property type="entry name" value="Medium-chain alcohol dehydrogenases, catalytic domain"/>
    <property type="match status" value="1"/>
</dbReference>
<dbReference type="Gene3D" id="3.40.50.720">
    <property type="entry name" value="NAD(P)-binding Rossmann-like Domain"/>
    <property type="match status" value="1"/>
</dbReference>
<dbReference type="InterPro" id="IPR013149">
    <property type="entry name" value="ADH-like_C"/>
</dbReference>
<dbReference type="InterPro" id="IPR013154">
    <property type="entry name" value="ADH-like_N"/>
</dbReference>
<dbReference type="InterPro" id="IPR014182">
    <property type="entry name" value="ADH_Zn_typ-1"/>
</dbReference>
<dbReference type="InterPro" id="IPR011032">
    <property type="entry name" value="GroES-like_sf"/>
</dbReference>
<dbReference type="InterPro" id="IPR036291">
    <property type="entry name" value="NAD(P)-bd_dom_sf"/>
</dbReference>
<dbReference type="InterPro" id="IPR020843">
    <property type="entry name" value="PKS_ER"/>
</dbReference>
<dbReference type="InterPro" id="IPR002364">
    <property type="entry name" value="Quin_OxRdtase/zeta-crystal_CS"/>
</dbReference>
<dbReference type="InterPro" id="IPR050700">
    <property type="entry name" value="YIM1/Zinc_Alcohol_DH_Fams"/>
</dbReference>
<dbReference type="NCBIfam" id="TIGR02817">
    <property type="entry name" value="adh_fam_1"/>
    <property type="match status" value="1"/>
</dbReference>
<dbReference type="PANTHER" id="PTHR11695">
    <property type="entry name" value="ALCOHOL DEHYDROGENASE RELATED"/>
    <property type="match status" value="1"/>
</dbReference>
<dbReference type="PANTHER" id="PTHR11695:SF294">
    <property type="entry name" value="RETICULON-4-INTERACTING PROTEIN 1, MITOCHONDRIAL"/>
    <property type="match status" value="1"/>
</dbReference>
<dbReference type="Pfam" id="PF08240">
    <property type="entry name" value="ADH_N"/>
    <property type="match status" value="1"/>
</dbReference>
<dbReference type="Pfam" id="PF00107">
    <property type="entry name" value="ADH_zinc_N"/>
    <property type="match status" value="1"/>
</dbReference>
<dbReference type="SMART" id="SM00829">
    <property type="entry name" value="PKS_ER"/>
    <property type="match status" value="1"/>
</dbReference>
<dbReference type="SUPFAM" id="SSF50129">
    <property type="entry name" value="GroES-like"/>
    <property type="match status" value="1"/>
</dbReference>
<dbReference type="SUPFAM" id="SSF51735">
    <property type="entry name" value="NAD(P)-binding Rossmann-fold domains"/>
    <property type="match status" value="1"/>
</dbReference>
<dbReference type="PROSITE" id="PS01162">
    <property type="entry name" value="QOR_ZETA_CRYSTAL"/>
    <property type="match status" value="1"/>
</dbReference>
<evidence type="ECO:0000305" key="1"/>
<feature type="chain" id="PRO_0000160931" description="Zinc-type alcohol dehydrogenase-like protein MW2112">
    <location>
        <begin position="1"/>
        <end position="335"/>
    </location>
</feature>
<accession>Q8NVD1</accession>
<proteinExistence type="inferred from homology"/>
<gene>
    <name type="ordered locus">MW2112</name>
</gene>